<organism>
    <name type="scientific">Burkholderia ambifaria (strain MC40-6)</name>
    <dbReference type="NCBI Taxonomy" id="398577"/>
    <lineage>
        <taxon>Bacteria</taxon>
        <taxon>Pseudomonadati</taxon>
        <taxon>Pseudomonadota</taxon>
        <taxon>Betaproteobacteria</taxon>
        <taxon>Burkholderiales</taxon>
        <taxon>Burkholderiaceae</taxon>
        <taxon>Burkholderia</taxon>
        <taxon>Burkholderia cepacia complex</taxon>
    </lineage>
</organism>
<name>KTHY_BURA4</name>
<keyword id="KW-0067">ATP-binding</keyword>
<keyword id="KW-0418">Kinase</keyword>
<keyword id="KW-0545">Nucleotide biosynthesis</keyword>
<keyword id="KW-0547">Nucleotide-binding</keyword>
<keyword id="KW-0808">Transferase</keyword>
<protein>
    <recommendedName>
        <fullName evidence="1">Thymidylate kinase</fullName>
        <ecNumber evidence="1">2.7.4.9</ecNumber>
    </recommendedName>
    <alternativeName>
        <fullName evidence="1">dTMP kinase</fullName>
    </alternativeName>
</protein>
<evidence type="ECO:0000255" key="1">
    <source>
        <dbReference type="HAMAP-Rule" id="MF_00165"/>
    </source>
</evidence>
<dbReference type="EC" id="2.7.4.9" evidence="1"/>
<dbReference type="EMBL" id="CP001025">
    <property type="protein sequence ID" value="ACB64287.1"/>
    <property type="molecule type" value="Genomic_DNA"/>
</dbReference>
<dbReference type="RefSeq" id="WP_011657084.1">
    <property type="nucleotide sequence ID" value="NC_010551.1"/>
</dbReference>
<dbReference type="SMR" id="B1YRL3"/>
<dbReference type="GeneID" id="93085964"/>
<dbReference type="KEGG" id="bac:BamMC406_1802"/>
<dbReference type="HOGENOM" id="CLU_049131_0_2_4"/>
<dbReference type="OrthoDB" id="9774907at2"/>
<dbReference type="Proteomes" id="UP000001680">
    <property type="component" value="Chromosome 1"/>
</dbReference>
<dbReference type="GO" id="GO:0005829">
    <property type="term" value="C:cytosol"/>
    <property type="evidence" value="ECO:0007669"/>
    <property type="project" value="TreeGrafter"/>
</dbReference>
<dbReference type="GO" id="GO:0005524">
    <property type="term" value="F:ATP binding"/>
    <property type="evidence" value="ECO:0007669"/>
    <property type="project" value="UniProtKB-UniRule"/>
</dbReference>
<dbReference type="GO" id="GO:0004798">
    <property type="term" value="F:dTMP kinase activity"/>
    <property type="evidence" value="ECO:0007669"/>
    <property type="project" value="UniProtKB-UniRule"/>
</dbReference>
<dbReference type="GO" id="GO:0006233">
    <property type="term" value="P:dTDP biosynthetic process"/>
    <property type="evidence" value="ECO:0007669"/>
    <property type="project" value="InterPro"/>
</dbReference>
<dbReference type="GO" id="GO:0006235">
    <property type="term" value="P:dTTP biosynthetic process"/>
    <property type="evidence" value="ECO:0007669"/>
    <property type="project" value="UniProtKB-UniRule"/>
</dbReference>
<dbReference type="GO" id="GO:0006227">
    <property type="term" value="P:dUDP biosynthetic process"/>
    <property type="evidence" value="ECO:0007669"/>
    <property type="project" value="TreeGrafter"/>
</dbReference>
<dbReference type="CDD" id="cd01672">
    <property type="entry name" value="TMPK"/>
    <property type="match status" value="1"/>
</dbReference>
<dbReference type="FunFam" id="3.40.50.300:FF:000225">
    <property type="entry name" value="Thymidylate kinase"/>
    <property type="match status" value="1"/>
</dbReference>
<dbReference type="Gene3D" id="3.40.50.300">
    <property type="entry name" value="P-loop containing nucleotide triphosphate hydrolases"/>
    <property type="match status" value="1"/>
</dbReference>
<dbReference type="HAMAP" id="MF_00165">
    <property type="entry name" value="Thymidylate_kinase"/>
    <property type="match status" value="1"/>
</dbReference>
<dbReference type="InterPro" id="IPR027417">
    <property type="entry name" value="P-loop_NTPase"/>
</dbReference>
<dbReference type="InterPro" id="IPR039430">
    <property type="entry name" value="Thymidylate_kin-like_dom"/>
</dbReference>
<dbReference type="InterPro" id="IPR018094">
    <property type="entry name" value="Thymidylate_kinase"/>
</dbReference>
<dbReference type="NCBIfam" id="TIGR00041">
    <property type="entry name" value="DTMP_kinase"/>
    <property type="match status" value="1"/>
</dbReference>
<dbReference type="PANTHER" id="PTHR10344">
    <property type="entry name" value="THYMIDYLATE KINASE"/>
    <property type="match status" value="1"/>
</dbReference>
<dbReference type="PANTHER" id="PTHR10344:SF4">
    <property type="entry name" value="UMP-CMP KINASE 2, MITOCHONDRIAL"/>
    <property type="match status" value="1"/>
</dbReference>
<dbReference type="Pfam" id="PF02223">
    <property type="entry name" value="Thymidylate_kin"/>
    <property type="match status" value="1"/>
</dbReference>
<dbReference type="SUPFAM" id="SSF52540">
    <property type="entry name" value="P-loop containing nucleoside triphosphate hydrolases"/>
    <property type="match status" value="1"/>
</dbReference>
<sequence>MASGKFITFEGIDGAGKTTHLQWFCERLQAKLAAGGRQVVVTREPGGTQLGEKLREILLNQPMDLETEALLMFAARREHLALVIEPALARGDWVVSDRFTDATFAYQGGGRGLPRDKLETLERWVQGGFQPDLTVLFDVAPQVASERRGAVRMPDKFESESDAFFSRTRGEYLRRAEEAPHRFAIVDATQSIPEIRQQLERVLAAL</sequence>
<comment type="function">
    <text evidence="1">Phosphorylation of dTMP to form dTDP in both de novo and salvage pathways of dTTP synthesis.</text>
</comment>
<comment type="catalytic activity">
    <reaction evidence="1">
        <text>dTMP + ATP = dTDP + ADP</text>
        <dbReference type="Rhea" id="RHEA:13517"/>
        <dbReference type="ChEBI" id="CHEBI:30616"/>
        <dbReference type="ChEBI" id="CHEBI:58369"/>
        <dbReference type="ChEBI" id="CHEBI:63528"/>
        <dbReference type="ChEBI" id="CHEBI:456216"/>
        <dbReference type="EC" id="2.7.4.9"/>
    </reaction>
</comment>
<comment type="similarity">
    <text evidence="1">Belongs to the thymidylate kinase family.</text>
</comment>
<proteinExistence type="inferred from homology"/>
<reference key="1">
    <citation type="submission" date="2008-04" db="EMBL/GenBank/DDBJ databases">
        <title>Complete sequence of chromosome 1 of Burkholderia ambifaria MC40-6.</title>
        <authorList>
            <person name="Copeland A."/>
            <person name="Lucas S."/>
            <person name="Lapidus A."/>
            <person name="Glavina del Rio T."/>
            <person name="Dalin E."/>
            <person name="Tice H."/>
            <person name="Pitluck S."/>
            <person name="Chain P."/>
            <person name="Malfatti S."/>
            <person name="Shin M."/>
            <person name="Vergez L."/>
            <person name="Lang D."/>
            <person name="Schmutz J."/>
            <person name="Larimer F."/>
            <person name="Land M."/>
            <person name="Hauser L."/>
            <person name="Kyrpides N."/>
            <person name="Lykidis A."/>
            <person name="Ramette A."/>
            <person name="Konstantinidis K."/>
            <person name="Tiedje J."/>
            <person name="Richardson P."/>
        </authorList>
    </citation>
    <scope>NUCLEOTIDE SEQUENCE [LARGE SCALE GENOMIC DNA]</scope>
    <source>
        <strain>MC40-6</strain>
    </source>
</reference>
<gene>
    <name evidence="1" type="primary">tmk</name>
    <name type="ordered locus">BamMC406_1802</name>
</gene>
<feature type="chain" id="PRO_1000097379" description="Thymidylate kinase">
    <location>
        <begin position="1"/>
        <end position="206"/>
    </location>
</feature>
<feature type="binding site" evidence="1">
    <location>
        <begin position="11"/>
        <end position="18"/>
    </location>
    <ligand>
        <name>ATP</name>
        <dbReference type="ChEBI" id="CHEBI:30616"/>
    </ligand>
</feature>
<accession>B1YRL3</accession>